<dbReference type="EMBL" id="CABZ01076171">
    <property type="status" value="NOT_ANNOTATED_CDS"/>
    <property type="molecule type" value="Genomic_DNA"/>
</dbReference>
<dbReference type="EMBL" id="CABZ01076172">
    <property type="status" value="NOT_ANNOTATED_CDS"/>
    <property type="molecule type" value="Genomic_DNA"/>
</dbReference>
<dbReference type="EMBL" id="CABZ01076173">
    <property type="status" value="NOT_ANNOTATED_CDS"/>
    <property type="molecule type" value="Genomic_DNA"/>
</dbReference>
<dbReference type="EMBL" id="BC059618">
    <property type="protein sequence ID" value="AAH59618.1"/>
    <property type="molecule type" value="mRNA"/>
</dbReference>
<dbReference type="RefSeq" id="NP_957071.1">
    <property type="nucleotide sequence ID" value="NM_200777.1"/>
</dbReference>
<dbReference type="RefSeq" id="XP_021324055.1">
    <property type="nucleotide sequence ID" value="XM_021468380.2"/>
</dbReference>
<dbReference type="SMR" id="F1QRX7"/>
<dbReference type="FunCoup" id="F1QRX7">
    <property type="interactions" value="789"/>
</dbReference>
<dbReference type="STRING" id="7955.ENSDARP00000040264"/>
<dbReference type="PaxDb" id="7955-ENSDARP00000040264"/>
<dbReference type="Ensembl" id="ENSDART00000040265">
    <property type="protein sequence ID" value="ENSDARP00000040264"/>
    <property type="gene ID" value="ENSDARG00000029581"/>
</dbReference>
<dbReference type="GeneID" id="393750"/>
<dbReference type="KEGG" id="dre:393750"/>
<dbReference type="AGR" id="ZFIN:ZDB-GENE-040426-1747"/>
<dbReference type="CTD" id="51256"/>
<dbReference type="ZFIN" id="ZDB-GENE-040426-1747">
    <property type="gene designation" value="tbc1d7"/>
</dbReference>
<dbReference type="eggNOG" id="ENOG502QPZD">
    <property type="taxonomic scope" value="Eukaryota"/>
</dbReference>
<dbReference type="InParanoid" id="F1QRX7"/>
<dbReference type="OMA" id="VMHTMWL"/>
<dbReference type="OrthoDB" id="18718at2759"/>
<dbReference type="PhylomeDB" id="F1QRX7"/>
<dbReference type="TreeFam" id="TF323655"/>
<dbReference type="PRO" id="PR:F1QRX7"/>
<dbReference type="Proteomes" id="UP000000437">
    <property type="component" value="Chromosome 20"/>
</dbReference>
<dbReference type="Bgee" id="ENSDARG00000029581">
    <property type="expression patterns" value="Expressed in muscle tissue and 20 other cell types or tissues"/>
</dbReference>
<dbReference type="GO" id="GO:0031410">
    <property type="term" value="C:cytoplasmic vesicle"/>
    <property type="evidence" value="ECO:0007669"/>
    <property type="project" value="UniProtKB-KW"/>
</dbReference>
<dbReference type="GO" id="GO:0005829">
    <property type="term" value="C:cytosol"/>
    <property type="evidence" value="ECO:0000250"/>
    <property type="project" value="UniProtKB"/>
</dbReference>
<dbReference type="GO" id="GO:0005765">
    <property type="term" value="C:lysosomal membrane"/>
    <property type="evidence" value="ECO:0007669"/>
    <property type="project" value="UniProtKB-SubCell"/>
</dbReference>
<dbReference type="GO" id="GO:0033596">
    <property type="term" value="C:TSC1-TSC2 complex"/>
    <property type="evidence" value="ECO:0000250"/>
    <property type="project" value="UniProtKB"/>
</dbReference>
<dbReference type="GO" id="GO:0005096">
    <property type="term" value="F:GTPase activator activity"/>
    <property type="evidence" value="ECO:0000318"/>
    <property type="project" value="GO_Central"/>
</dbReference>
<dbReference type="GO" id="GO:0062078">
    <property type="term" value="F:TSC1-TSC2 complex binding"/>
    <property type="evidence" value="ECO:0000318"/>
    <property type="project" value="GO_Central"/>
</dbReference>
<dbReference type="GO" id="GO:0090630">
    <property type="term" value="P:activation of GTPase activity"/>
    <property type="evidence" value="ECO:0000250"/>
    <property type="project" value="UniProtKB"/>
</dbReference>
<dbReference type="GO" id="GO:0009267">
    <property type="term" value="P:cellular response to starvation"/>
    <property type="evidence" value="ECO:0000250"/>
    <property type="project" value="UniProtKB"/>
</dbReference>
<dbReference type="GO" id="GO:0032007">
    <property type="term" value="P:negative regulation of TOR signaling"/>
    <property type="evidence" value="ECO:0000250"/>
    <property type="project" value="UniProtKB"/>
</dbReference>
<dbReference type="GO" id="GO:1904262">
    <property type="term" value="P:negative regulation of TORC1 signaling"/>
    <property type="evidence" value="ECO:0000250"/>
    <property type="project" value="UniProtKB"/>
</dbReference>
<dbReference type="GO" id="GO:0070848">
    <property type="term" value="P:response to growth factor"/>
    <property type="evidence" value="ECO:0000250"/>
    <property type="project" value="UniProtKB"/>
</dbReference>
<dbReference type="FunFam" id="1.10.10.750:FF:000006">
    <property type="entry name" value="TBC1 domain family member 7"/>
    <property type="match status" value="1"/>
</dbReference>
<dbReference type="FunFam" id="1.10.472.80:FF:000028">
    <property type="entry name" value="TBC1 domain family member 7"/>
    <property type="match status" value="1"/>
</dbReference>
<dbReference type="FunFam" id="1.10.8.680:FF:000001">
    <property type="entry name" value="TBC1 domain family, member 7"/>
    <property type="match status" value="1"/>
</dbReference>
<dbReference type="Gene3D" id="1.10.10.750">
    <property type="entry name" value="Ypt/Rab-GAP domain of gyp1p, domain 1"/>
    <property type="match status" value="1"/>
</dbReference>
<dbReference type="Gene3D" id="1.10.8.680">
    <property type="entry name" value="Ypt/Rab-GAP domain of gyp1p, domain 2"/>
    <property type="match status" value="1"/>
</dbReference>
<dbReference type="Gene3D" id="1.10.472.80">
    <property type="entry name" value="Ypt/Rab-GAP domain of gyp1p, domain 3"/>
    <property type="match status" value="1"/>
</dbReference>
<dbReference type="InterPro" id="IPR000195">
    <property type="entry name" value="Rab-GAP-TBC_dom"/>
</dbReference>
<dbReference type="InterPro" id="IPR035969">
    <property type="entry name" value="Rab-GAP_TBC_sf"/>
</dbReference>
<dbReference type="InterPro" id="IPR039842">
    <property type="entry name" value="TBC1D7"/>
</dbReference>
<dbReference type="InterPro" id="IPR043039">
    <property type="entry name" value="TBC1D7_dom2"/>
</dbReference>
<dbReference type="PANTHER" id="PTHR13530">
    <property type="entry name" value="TBC1 DOMAIN FAMILY MEMBER 7"/>
    <property type="match status" value="1"/>
</dbReference>
<dbReference type="PANTHER" id="PTHR13530:SF3">
    <property type="entry name" value="TBC1 DOMAIN FAMILY MEMBER 7"/>
    <property type="match status" value="1"/>
</dbReference>
<dbReference type="Pfam" id="PF00566">
    <property type="entry name" value="RabGAP-TBC"/>
    <property type="match status" value="1"/>
</dbReference>
<dbReference type="SUPFAM" id="SSF47923">
    <property type="entry name" value="Ypt/Rab-GAP domain of gyp1p"/>
    <property type="match status" value="2"/>
</dbReference>
<dbReference type="PROSITE" id="PS50086">
    <property type="entry name" value="TBC_RABGAP"/>
    <property type="match status" value="1"/>
</dbReference>
<keyword id="KW-0963">Cytoplasm</keyword>
<keyword id="KW-0968">Cytoplasmic vesicle</keyword>
<keyword id="KW-0343">GTPase activation</keyword>
<keyword id="KW-0458">Lysosome</keyword>
<keyword id="KW-0472">Membrane</keyword>
<keyword id="KW-1185">Reference proteome</keyword>
<accession>F1QRX7</accession>
<accession>Q6PBQ9</accession>
<protein>
    <recommendedName>
        <fullName evidence="3">TBC1 domain family member 7</fullName>
    </recommendedName>
</protein>
<proteinExistence type="evidence at transcript level"/>
<organism>
    <name type="scientific">Danio rerio</name>
    <name type="common">Zebrafish</name>
    <name type="synonym">Brachydanio rerio</name>
    <dbReference type="NCBI Taxonomy" id="7955"/>
    <lineage>
        <taxon>Eukaryota</taxon>
        <taxon>Metazoa</taxon>
        <taxon>Chordata</taxon>
        <taxon>Craniata</taxon>
        <taxon>Vertebrata</taxon>
        <taxon>Euteleostomi</taxon>
        <taxon>Actinopterygii</taxon>
        <taxon>Neopterygii</taxon>
        <taxon>Teleostei</taxon>
        <taxon>Ostariophysi</taxon>
        <taxon>Cypriniformes</taxon>
        <taxon>Danionidae</taxon>
        <taxon>Danioninae</taxon>
        <taxon>Danio</taxon>
    </lineage>
</organism>
<evidence type="ECO:0000250" key="1">
    <source>
        <dbReference type="UniProtKB" id="Q9P0N9"/>
    </source>
</evidence>
<evidence type="ECO:0000255" key="2">
    <source>
        <dbReference type="PROSITE-ProRule" id="PRU00163"/>
    </source>
</evidence>
<evidence type="ECO:0000305" key="3"/>
<name>TBCD7_DANRE</name>
<reference key="1">
    <citation type="journal article" date="2013" name="Nature">
        <title>The zebrafish reference genome sequence and its relationship to the human genome.</title>
        <authorList>
            <person name="Howe K."/>
            <person name="Clark M.D."/>
            <person name="Torroja C.F."/>
            <person name="Torrance J."/>
            <person name="Berthelot C."/>
            <person name="Muffato M."/>
            <person name="Collins J.E."/>
            <person name="Humphray S."/>
            <person name="McLaren K."/>
            <person name="Matthews L."/>
            <person name="McLaren S."/>
            <person name="Sealy I."/>
            <person name="Caccamo M."/>
            <person name="Churcher C."/>
            <person name="Scott C."/>
            <person name="Barrett J.C."/>
            <person name="Koch R."/>
            <person name="Rauch G.J."/>
            <person name="White S."/>
            <person name="Chow W."/>
            <person name="Kilian B."/>
            <person name="Quintais L.T."/>
            <person name="Guerra-Assuncao J.A."/>
            <person name="Zhou Y."/>
            <person name="Gu Y."/>
            <person name="Yen J."/>
            <person name="Vogel J.H."/>
            <person name="Eyre T."/>
            <person name="Redmond S."/>
            <person name="Banerjee R."/>
            <person name="Chi J."/>
            <person name="Fu B."/>
            <person name="Langley E."/>
            <person name="Maguire S.F."/>
            <person name="Laird G.K."/>
            <person name="Lloyd D."/>
            <person name="Kenyon E."/>
            <person name="Donaldson S."/>
            <person name="Sehra H."/>
            <person name="Almeida-King J."/>
            <person name="Loveland J."/>
            <person name="Trevanion S."/>
            <person name="Jones M."/>
            <person name="Quail M."/>
            <person name="Willey D."/>
            <person name="Hunt A."/>
            <person name="Burton J."/>
            <person name="Sims S."/>
            <person name="McLay K."/>
            <person name="Plumb B."/>
            <person name="Davis J."/>
            <person name="Clee C."/>
            <person name="Oliver K."/>
            <person name="Clark R."/>
            <person name="Riddle C."/>
            <person name="Elliot D."/>
            <person name="Threadgold G."/>
            <person name="Harden G."/>
            <person name="Ware D."/>
            <person name="Begum S."/>
            <person name="Mortimore B."/>
            <person name="Kerry G."/>
            <person name="Heath P."/>
            <person name="Phillimore B."/>
            <person name="Tracey A."/>
            <person name="Corby N."/>
            <person name="Dunn M."/>
            <person name="Johnson C."/>
            <person name="Wood J."/>
            <person name="Clark S."/>
            <person name="Pelan S."/>
            <person name="Griffiths G."/>
            <person name="Smith M."/>
            <person name="Glithero R."/>
            <person name="Howden P."/>
            <person name="Barker N."/>
            <person name="Lloyd C."/>
            <person name="Stevens C."/>
            <person name="Harley J."/>
            <person name="Holt K."/>
            <person name="Panagiotidis G."/>
            <person name="Lovell J."/>
            <person name="Beasley H."/>
            <person name="Henderson C."/>
            <person name="Gordon D."/>
            <person name="Auger K."/>
            <person name="Wright D."/>
            <person name="Collins J."/>
            <person name="Raisen C."/>
            <person name="Dyer L."/>
            <person name="Leung K."/>
            <person name="Robertson L."/>
            <person name="Ambridge K."/>
            <person name="Leongamornlert D."/>
            <person name="McGuire S."/>
            <person name="Gilderthorp R."/>
            <person name="Griffiths C."/>
            <person name="Manthravadi D."/>
            <person name="Nichol S."/>
            <person name="Barker G."/>
            <person name="Whitehead S."/>
            <person name="Kay M."/>
            <person name="Brown J."/>
            <person name="Murnane C."/>
            <person name="Gray E."/>
            <person name="Humphries M."/>
            <person name="Sycamore N."/>
            <person name="Barker D."/>
            <person name="Saunders D."/>
            <person name="Wallis J."/>
            <person name="Babbage A."/>
            <person name="Hammond S."/>
            <person name="Mashreghi-Mohammadi M."/>
            <person name="Barr L."/>
            <person name="Martin S."/>
            <person name="Wray P."/>
            <person name="Ellington A."/>
            <person name="Matthews N."/>
            <person name="Ellwood M."/>
            <person name="Woodmansey R."/>
            <person name="Clark G."/>
            <person name="Cooper J."/>
            <person name="Tromans A."/>
            <person name="Grafham D."/>
            <person name="Skuce C."/>
            <person name="Pandian R."/>
            <person name="Andrews R."/>
            <person name="Harrison E."/>
            <person name="Kimberley A."/>
            <person name="Garnett J."/>
            <person name="Fosker N."/>
            <person name="Hall R."/>
            <person name="Garner P."/>
            <person name="Kelly D."/>
            <person name="Bird C."/>
            <person name="Palmer S."/>
            <person name="Gehring I."/>
            <person name="Berger A."/>
            <person name="Dooley C.M."/>
            <person name="Ersan-Urun Z."/>
            <person name="Eser C."/>
            <person name="Geiger H."/>
            <person name="Geisler M."/>
            <person name="Karotki L."/>
            <person name="Kirn A."/>
            <person name="Konantz J."/>
            <person name="Konantz M."/>
            <person name="Oberlander M."/>
            <person name="Rudolph-Geiger S."/>
            <person name="Teucke M."/>
            <person name="Lanz C."/>
            <person name="Raddatz G."/>
            <person name="Osoegawa K."/>
            <person name="Zhu B."/>
            <person name="Rapp A."/>
            <person name="Widaa S."/>
            <person name="Langford C."/>
            <person name="Yang F."/>
            <person name="Schuster S.C."/>
            <person name="Carter N.P."/>
            <person name="Harrow J."/>
            <person name="Ning Z."/>
            <person name="Herrero J."/>
            <person name="Searle S.M."/>
            <person name="Enright A."/>
            <person name="Geisler R."/>
            <person name="Plasterk R.H."/>
            <person name="Lee C."/>
            <person name="Westerfield M."/>
            <person name="de Jong P.J."/>
            <person name="Zon L.I."/>
            <person name="Postlethwait J.H."/>
            <person name="Nusslein-Volhard C."/>
            <person name="Hubbard T.J."/>
            <person name="Roest Crollius H."/>
            <person name="Rogers J."/>
            <person name="Stemple D.L."/>
        </authorList>
    </citation>
    <scope>NUCLEOTIDE SEQUENCE [LARGE SCALE GENOMIC DNA]</scope>
    <source>
        <strain>Tuebingen</strain>
    </source>
</reference>
<reference key="2">
    <citation type="submission" date="2003-10" db="EMBL/GenBank/DDBJ databases">
        <authorList>
            <consortium name="NIH - Zebrafish Gene Collection (ZGC) project"/>
        </authorList>
    </citation>
    <scope>NUCLEOTIDE SEQUENCE [LARGE SCALE MRNA]</scope>
    <source>
        <tissue>Eye</tissue>
    </source>
</reference>
<comment type="function">
    <text evidence="1">Non-catalytic component of the TSC-TBC complex, a multiprotein complex that acts as a negative regulator of the canonical mTORC1 complex, an evolutionarily conserved central nutrient sensor that stimulates anabolic reactions and macromolecule biosynthesis to promote cellular biomass generation and growth. The TSC-TBC complex acts as a GTPase-activating protein (GAP) for the small GTPase RHEB, a direct activator of the protein kinase activity of mTORC1. In absence of nutrients, the TSC-TBC complex inhibits mTORC1, thereby preventing phosphorylation of ribosomal protein S6 kinase (RPS6KB1 and RPS6KB2) and EIF4EBP1 (4E-BP1) by the mTORC1 signaling. The TSC-TBC complex is inactivated in response to nutrients, relieving inhibition of mTORC1.</text>
</comment>
<comment type="subunit">
    <text evidence="1">Component of the TSC-TBC complex (also named Rhebulator complex), composed of 2 molecules of TSC1, 2 molecules of TSC2 and 1 molecule of TBC1D7.</text>
</comment>
<comment type="subcellular location">
    <subcellularLocation>
        <location evidence="1">Lysosome membrane</location>
    </subcellularLocation>
    <subcellularLocation>
        <location evidence="1">Cytoplasmic vesicle</location>
    </subcellularLocation>
    <subcellularLocation>
        <location evidence="1">Cytoplasm</location>
        <location evidence="1">Cytosol</location>
    </subcellularLocation>
    <text evidence="1">Localizes in the cytoplasmic vesicles of the endomembrane in association with the TSC-TBC complex. Recruited to lysosomal membranes in a RHEB-dependent process in absence of nutrients. In response to nutrients, the complex dissociates from lysosomal membranes and relocalizes to the cytosol.</text>
</comment>
<gene>
    <name type="primary">tbc1d7</name>
</gene>
<feature type="chain" id="PRO_0000419487" description="TBC1 domain family member 7">
    <location>
        <begin position="1"/>
        <end position="294"/>
    </location>
</feature>
<feature type="domain" description="Rab-GAP TBC" evidence="2">
    <location>
        <begin position="50"/>
        <end position="232"/>
    </location>
</feature>
<feature type="sequence conflict" description="In Ref. 2; AAH59618." evidence="3" ref="2">
    <original>P</original>
    <variation>Q</variation>
    <location>
        <position position="103"/>
    </location>
</feature>
<feature type="sequence conflict" description="In Ref. 2; AAH59618." evidence="3" ref="2">
    <original>M</original>
    <variation>I</variation>
    <location>
        <position position="254"/>
    </location>
</feature>
<feature type="sequence conflict" description="In Ref. 2; AAH59618." evidence="3" ref="2">
    <original>I</original>
    <variation>V</variation>
    <location>
        <position position="260"/>
    </location>
</feature>
<sequence>MADDPQRNFRSAYYEKVGFRGVEEKKSLEILLKDNPLDVEKLSTFSQRFPLPSMYRIHVWKVLLGILPPHSDSHALVRQYRVDQFEDVSCALTVMRFIHASTPQTEIYLRMFQLENHTLPRRTELRPPDAEDENFLAIARAMEEIVDDPVDCFWLVRCFINQFKHKFGDSIPHLPKSLEHFLSQEDVCLLSHLKASGALALLPYSLWFRRCFAGCLPESSLQRVWDKVISGSCKILVFVAVEILLSHKIVIMGMNQPDAIYHFLSNMPQENTDAIVTKAIDLWHKYCGTPMHSV</sequence>